<sequence length="332" mass="36519">MLQAIGWPWPGPPADSAWQAMCAMYSQCRPARVIEQHRSGYVVAEAPEVPIKVESLPAWQRRSFPPHERAVVGDWVLLDGRRIVALLPRRTVIKRLAAGEHYRQQLIAANLDTAFIVCGLDGDFNPRRIERYCVLIASGGVEPVVVLTKVDLCVDVAAAVAVLREHSSQALAVVAVDARKAEPVVALYPWLLPGRTVALLGSSGAGKSTLTNTLLGEQRMKVGEVRQRDSRGRHTTTHRALLPLPSGACLIDTPGMRELKFTGEEDLVEEFADIELLATQCRFRDCAHQAEPGCAVRAAIGCGTLDPQRLHHYFKLRGEIVGAADRSMLRRY</sequence>
<protein>
    <recommendedName>
        <fullName evidence="1">Small ribosomal subunit biogenesis GTPase RsgA</fullName>
        <ecNumber evidence="1">3.6.1.-</ecNumber>
    </recommendedName>
</protein>
<evidence type="ECO:0000255" key="1">
    <source>
        <dbReference type="HAMAP-Rule" id="MF_01820"/>
    </source>
</evidence>
<evidence type="ECO:0000255" key="2">
    <source>
        <dbReference type="PROSITE-ProRule" id="PRU01058"/>
    </source>
</evidence>
<comment type="function">
    <text evidence="1">One of several proteins that assist in the late maturation steps of the functional core of the 30S ribosomal subunit. Helps release RbfA from mature subunits. May play a role in the assembly of ribosomal proteins into the subunit. Circularly permuted GTPase that catalyzes slow GTP hydrolysis, GTPase activity is stimulated by the 30S ribosomal subunit.</text>
</comment>
<comment type="cofactor">
    <cofactor evidence="1">
        <name>Zn(2+)</name>
        <dbReference type="ChEBI" id="CHEBI:29105"/>
    </cofactor>
    <text evidence="1">Binds 1 zinc ion per subunit.</text>
</comment>
<comment type="subunit">
    <text evidence="1">Monomer. Associates with 30S ribosomal subunit, binds 16S rRNA.</text>
</comment>
<comment type="subcellular location">
    <subcellularLocation>
        <location evidence="1">Cytoplasm</location>
    </subcellularLocation>
</comment>
<comment type="similarity">
    <text evidence="1">Belongs to the TRAFAC class YlqF/YawG GTPase family. RsgA subfamily.</text>
</comment>
<gene>
    <name evidence="1" type="primary">rsgA</name>
    <name type="ordered locus">XfasM23_1673</name>
</gene>
<feature type="chain" id="PRO_1000216054" description="Small ribosomal subunit biogenesis GTPase RsgA">
    <location>
        <begin position="1"/>
        <end position="332"/>
    </location>
</feature>
<feature type="domain" description="CP-type G" evidence="2">
    <location>
        <begin position="103"/>
        <end position="259"/>
    </location>
</feature>
<feature type="binding site" evidence="1">
    <location>
        <begin position="148"/>
        <end position="151"/>
    </location>
    <ligand>
        <name>GTP</name>
        <dbReference type="ChEBI" id="CHEBI:37565"/>
    </ligand>
</feature>
<feature type="binding site" evidence="1">
    <location>
        <begin position="201"/>
        <end position="209"/>
    </location>
    <ligand>
        <name>GTP</name>
        <dbReference type="ChEBI" id="CHEBI:37565"/>
    </ligand>
</feature>
<feature type="binding site" evidence="1">
    <location>
        <position position="281"/>
    </location>
    <ligand>
        <name>Zn(2+)</name>
        <dbReference type="ChEBI" id="CHEBI:29105"/>
    </ligand>
</feature>
<feature type="binding site" evidence="1">
    <location>
        <position position="286"/>
    </location>
    <ligand>
        <name>Zn(2+)</name>
        <dbReference type="ChEBI" id="CHEBI:29105"/>
    </ligand>
</feature>
<feature type="binding site" evidence="1">
    <location>
        <position position="288"/>
    </location>
    <ligand>
        <name>Zn(2+)</name>
        <dbReference type="ChEBI" id="CHEBI:29105"/>
    </ligand>
</feature>
<feature type="binding site" evidence="1">
    <location>
        <position position="294"/>
    </location>
    <ligand>
        <name>Zn(2+)</name>
        <dbReference type="ChEBI" id="CHEBI:29105"/>
    </ligand>
</feature>
<accession>B2I7R5</accession>
<name>RSGA_XYLF2</name>
<proteinExistence type="inferred from homology"/>
<reference key="1">
    <citation type="journal article" date="2010" name="J. Bacteriol.">
        <title>Whole genome sequences of two Xylella fastidiosa strains (M12 and M23) causing almond leaf scorch disease in California.</title>
        <authorList>
            <person name="Chen J."/>
            <person name="Xie G."/>
            <person name="Han S."/>
            <person name="Chertkov O."/>
            <person name="Sims D."/>
            <person name="Civerolo E.L."/>
        </authorList>
    </citation>
    <scope>NUCLEOTIDE SEQUENCE [LARGE SCALE GENOMIC DNA]</scope>
    <source>
        <strain>M23</strain>
    </source>
</reference>
<organism>
    <name type="scientific">Xylella fastidiosa (strain M23)</name>
    <dbReference type="NCBI Taxonomy" id="405441"/>
    <lineage>
        <taxon>Bacteria</taxon>
        <taxon>Pseudomonadati</taxon>
        <taxon>Pseudomonadota</taxon>
        <taxon>Gammaproteobacteria</taxon>
        <taxon>Lysobacterales</taxon>
        <taxon>Lysobacteraceae</taxon>
        <taxon>Xylella</taxon>
    </lineage>
</organism>
<dbReference type="EC" id="3.6.1.-" evidence="1"/>
<dbReference type="EMBL" id="CP001011">
    <property type="protein sequence ID" value="ACB93080.1"/>
    <property type="molecule type" value="Genomic_DNA"/>
</dbReference>
<dbReference type="SMR" id="B2I7R5"/>
<dbReference type="KEGG" id="xfn:XfasM23_1673"/>
<dbReference type="HOGENOM" id="CLU_033617_0_1_6"/>
<dbReference type="Proteomes" id="UP000001698">
    <property type="component" value="Chromosome"/>
</dbReference>
<dbReference type="GO" id="GO:0005737">
    <property type="term" value="C:cytoplasm"/>
    <property type="evidence" value="ECO:0007669"/>
    <property type="project" value="UniProtKB-SubCell"/>
</dbReference>
<dbReference type="GO" id="GO:0005525">
    <property type="term" value="F:GTP binding"/>
    <property type="evidence" value="ECO:0007669"/>
    <property type="project" value="UniProtKB-UniRule"/>
</dbReference>
<dbReference type="GO" id="GO:0003924">
    <property type="term" value="F:GTPase activity"/>
    <property type="evidence" value="ECO:0007669"/>
    <property type="project" value="UniProtKB-UniRule"/>
</dbReference>
<dbReference type="GO" id="GO:0046872">
    <property type="term" value="F:metal ion binding"/>
    <property type="evidence" value="ECO:0007669"/>
    <property type="project" value="UniProtKB-KW"/>
</dbReference>
<dbReference type="GO" id="GO:0019843">
    <property type="term" value="F:rRNA binding"/>
    <property type="evidence" value="ECO:0007669"/>
    <property type="project" value="UniProtKB-KW"/>
</dbReference>
<dbReference type="GO" id="GO:0042274">
    <property type="term" value="P:ribosomal small subunit biogenesis"/>
    <property type="evidence" value="ECO:0007669"/>
    <property type="project" value="UniProtKB-UniRule"/>
</dbReference>
<dbReference type="CDD" id="cd01854">
    <property type="entry name" value="YjeQ_EngC"/>
    <property type="match status" value="1"/>
</dbReference>
<dbReference type="Gene3D" id="3.40.50.300">
    <property type="entry name" value="P-loop containing nucleotide triphosphate hydrolases"/>
    <property type="match status" value="1"/>
</dbReference>
<dbReference type="Gene3D" id="1.10.40.50">
    <property type="entry name" value="Probable gtpase engc, domain 3"/>
    <property type="match status" value="1"/>
</dbReference>
<dbReference type="HAMAP" id="MF_01820">
    <property type="entry name" value="GTPase_RsgA"/>
    <property type="match status" value="1"/>
</dbReference>
<dbReference type="InterPro" id="IPR030378">
    <property type="entry name" value="G_CP_dom"/>
</dbReference>
<dbReference type="InterPro" id="IPR027417">
    <property type="entry name" value="P-loop_NTPase"/>
</dbReference>
<dbReference type="InterPro" id="IPR004881">
    <property type="entry name" value="Ribosome_biogen_GTPase_RsgA"/>
</dbReference>
<dbReference type="InterPro" id="IPR010914">
    <property type="entry name" value="RsgA_GTPase_dom"/>
</dbReference>
<dbReference type="NCBIfam" id="TIGR00157">
    <property type="entry name" value="ribosome small subunit-dependent GTPase A"/>
    <property type="match status" value="1"/>
</dbReference>
<dbReference type="PANTHER" id="PTHR32120">
    <property type="entry name" value="SMALL RIBOSOMAL SUBUNIT BIOGENESIS GTPASE RSGA"/>
    <property type="match status" value="1"/>
</dbReference>
<dbReference type="PANTHER" id="PTHR32120:SF10">
    <property type="entry name" value="SMALL RIBOSOMAL SUBUNIT BIOGENESIS GTPASE RSGA"/>
    <property type="match status" value="1"/>
</dbReference>
<dbReference type="Pfam" id="PF03193">
    <property type="entry name" value="RsgA_GTPase"/>
    <property type="match status" value="1"/>
</dbReference>
<dbReference type="SUPFAM" id="SSF52540">
    <property type="entry name" value="P-loop containing nucleoside triphosphate hydrolases"/>
    <property type="match status" value="1"/>
</dbReference>
<dbReference type="PROSITE" id="PS50936">
    <property type="entry name" value="ENGC_GTPASE"/>
    <property type="match status" value="1"/>
</dbReference>
<dbReference type="PROSITE" id="PS51721">
    <property type="entry name" value="G_CP"/>
    <property type="match status" value="1"/>
</dbReference>
<keyword id="KW-0963">Cytoplasm</keyword>
<keyword id="KW-0342">GTP-binding</keyword>
<keyword id="KW-0378">Hydrolase</keyword>
<keyword id="KW-0479">Metal-binding</keyword>
<keyword id="KW-0547">Nucleotide-binding</keyword>
<keyword id="KW-0690">Ribosome biogenesis</keyword>
<keyword id="KW-0694">RNA-binding</keyword>
<keyword id="KW-0699">rRNA-binding</keyword>
<keyword id="KW-0862">Zinc</keyword>